<comment type="function">
    <text evidence="4 5 7 8">Central scaffolding component of the centrioles ensuring their 9-fold symmetry (PubMed:17412918, PubMed:17463247, PubMed:30013109). Required for centrosome biogenesis and duplication (PubMed:17412918, PubMed:17463247, PubMed:30013109, PubMed:33704067). In ciliated neurons, required for centriole assembly but not necessary for cilium basal body and cilia function (PubMed:30013109). Required for sperm cilium basal body elongation together with Cep135 and Ana2 (PubMed:30013109).</text>
</comment>
<comment type="subunit">
    <text evidence="2 6 8">Nine homodimers form a cartwheel structure with an internal diameter of 23 nM and radial spokes connecting to the microtubule triplets (By similarity). Homodimer (PubMed:33704067). Interacts with Gorab (via C-terminus); binds as a homodimer to a Gorab monomer (PubMed:29892014, PubMed:33704067).</text>
</comment>
<comment type="subcellular location">
    <subcellularLocation>
        <location evidence="5 7">Cytoplasm</location>
        <location evidence="5 7">Cytoskeleton</location>
        <location evidence="5 7">Microtubule organizing center</location>
        <location evidence="5 7">Centrosome</location>
    </subcellularLocation>
    <subcellularLocation>
        <location evidence="6">Cytoplasm</location>
        <location evidence="6">Cytoskeleton</location>
        <location evidence="6">Microtubule organizing center</location>
        <location evidence="6">Centrosome</location>
        <location evidence="6">Centriole</location>
    </subcellularLocation>
    <subcellularLocation>
        <location evidence="7">Cytoplasm</location>
        <location evidence="7">Cytoskeleton</location>
        <location evidence="7">Cilium basal body</location>
    </subcellularLocation>
    <text evidence="5">Component of the centrosome.</text>
</comment>
<comment type="tissue specificity">
    <text evidence="7">Expressed in spermatocyte and speratids (at protein level).</text>
</comment>
<comment type="developmental stage">
    <text evidence="7">After pupae formation, expressed during centriole-to-cilium basal body conversion and in the early phase of ciliogenesis in neurons, then disappears (at protein level).</text>
</comment>
<comment type="domain">
    <text evidence="1">The 35 nM long coiled-coil domain mediates homodimerization while the globular N-terminus links the dimers at an angle of 40 degrees to form the inner ring.</text>
</comment>
<comment type="disruption phenotype">
    <text evidence="7 8">Results in lack of centrioles and cilium formation, defects in coordination and reduced fertility (PubMed:30013109, PubMed:33704067). In neurons, RNAi-mediated knockdown after centriole assembly does not affect neuronal cilium basal body, cilia formation or movement coordination (PubMed:30013109). In spermatocytes, RNAi-mediated knockdown before centriole biogenesis results in reduced centriole numbers and fertility (PubMed:30013109). On the contrary RNAi-mediated knockdown after centriole biogenesis does not affect the number of centrioles, but affects maturation of a full-length cilium basal body and reduces fertility (PubMed:30013109).</text>
</comment>
<dbReference type="EMBL" id="AE014297">
    <property type="protein sequence ID" value="AAF56983.2"/>
    <property type="molecule type" value="Genomic_DNA"/>
</dbReference>
<dbReference type="EMBL" id="AY075270">
    <property type="protein sequence ID" value="AAL68137.1"/>
    <property type="molecule type" value="mRNA"/>
</dbReference>
<dbReference type="EMBL" id="BT150139">
    <property type="protein sequence ID" value="AGO63482.1"/>
    <property type="molecule type" value="mRNA"/>
</dbReference>
<dbReference type="RefSeq" id="NP_651756.1">
    <property type="nucleotide sequence ID" value="NM_143499.3"/>
</dbReference>
<dbReference type="PDB" id="5AL7">
    <property type="method" value="X-ray"/>
    <property type="resolution" value="2.92 A"/>
    <property type="chains" value="A/B=2-216"/>
</dbReference>
<dbReference type="PDBsum" id="5AL7"/>
<dbReference type="SMR" id="Q9VAC8"/>
<dbReference type="BioGRID" id="68411">
    <property type="interactions" value="23"/>
</dbReference>
<dbReference type="FunCoup" id="Q9VAC8">
    <property type="interactions" value="566"/>
</dbReference>
<dbReference type="IntAct" id="Q9VAC8">
    <property type="interactions" value="5"/>
</dbReference>
<dbReference type="MINT" id="Q9VAC8"/>
<dbReference type="STRING" id="7227.FBpp0084912"/>
<dbReference type="PaxDb" id="7227-FBpp0084912"/>
<dbReference type="DNASU" id="43555"/>
<dbReference type="EnsemblMetazoa" id="FBtr0085546">
    <property type="protein sequence ID" value="FBpp0084912"/>
    <property type="gene ID" value="FBgn0039731"/>
</dbReference>
<dbReference type="GeneID" id="43555"/>
<dbReference type="KEGG" id="dme:Dmel_CG15524"/>
<dbReference type="AGR" id="FB:FBgn0039731"/>
<dbReference type="CTD" id="43555"/>
<dbReference type="FlyBase" id="FBgn0039731">
    <property type="gene designation" value="Sas-6"/>
</dbReference>
<dbReference type="VEuPathDB" id="VectorBase:FBgn0039731"/>
<dbReference type="eggNOG" id="ENOG502QQ4W">
    <property type="taxonomic scope" value="Eukaryota"/>
</dbReference>
<dbReference type="HOGENOM" id="CLU_575229_0_0_1"/>
<dbReference type="InParanoid" id="Q9VAC8"/>
<dbReference type="OMA" id="HMAMKIK"/>
<dbReference type="OrthoDB" id="49058at2759"/>
<dbReference type="PhylomeDB" id="Q9VAC8"/>
<dbReference type="SignaLink" id="Q9VAC8"/>
<dbReference type="BioGRID-ORCS" id="43555">
    <property type="hits" value="0 hits in 1 CRISPR screen"/>
</dbReference>
<dbReference type="CD-CODE" id="2838EF58">
    <property type="entry name" value="Centrosome"/>
</dbReference>
<dbReference type="EvolutionaryTrace" id="Q9VAC8"/>
<dbReference type="GenomeRNAi" id="43555"/>
<dbReference type="PRO" id="PR:Q9VAC8"/>
<dbReference type="Proteomes" id="UP000000803">
    <property type="component" value="Chromosome 3R"/>
</dbReference>
<dbReference type="Bgee" id="FBgn0039731">
    <property type="expression patterns" value="Expressed in adult enteroendocrine precursor cell in adult midgut (Drosophila) and 31 other cell types or tissues"/>
</dbReference>
<dbReference type="GO" id="GO:0005814">
    <property type="term" value="C:centriole"/>
    <property type="evidence" value="ECO:0000314"/>
    <property type="project" value="FlyBase"/>
</dbReference>
<dbReference type="GO" id="GO:0005813">
    <property type="term" value="C:centrosome"/>
    <property type="evidence" value="ECO:0000314"/>
    <property type="project" value="FlyBase"/>
</dbReference>
<dbReference type="GO" id="GO:0036064">
    <property type="term" value="C:ciliary basal body"/>
    <property type="evidence" value="ECO:0000314"/>
    <property type="project" value="UniProtKB"/>
</dbReference>
<dbReference type="GO" id="GO:0005737">
    <property type="term" value="C:cytoplasm"/>
    <property type="evidence" value="ECO:0007669"/>
    <property type="project" value="UniProtKB-KW"/>
</dbReference>
<dbReference type="GO" id="GO:0098534">
    <property type="term" value="P:centriole assembly"/>
    <property type="evidence" value="ECO:0000315"/>
    <property type="project" value="UniProtKB"/>
</dbReference>
<dbReference type="GO" id="GO:0007099">
    <property type="term" value="P:centriole replication"/>
    <property type="evidence" value="ECO:0000314"/>
    <property type="project" value="FlyBase"/>
</dbReference>
<dbReference type="GO" id="GO:0010457">
    <property type="term" value="P:centriole-centriole cohesion"/>
    <property type="evidence" value="ECO:0000314"/>
    <property type="project" value="FlyBase"/>
</dbReference>
<dbReference type="GO" id="GO:0007098">
    <property type="term" value="P:centrosome cycle"/>
    <property type="evidence" value="ECO:0000315"/>
    <property type="project" value="FlyBase"/>
</dbReference>
<dbReference type="GO" id="GO:0051298">
    <property type="term" value="P:centrosome duplication"/>
    <property type="evidence" value="ECO:0000250"/>
    <property type="project" value="UniProtKB"/>
</dbReference>
<dbReference type="GO" id="GO:0032053">
    <property type="term" value="P:ciliary basal body organization"/>
    <property type="evidence" value="ECO:0000315"/>
    <property type="project" value="UniProtKB"/>
</dbReference>
<dbReference type="GO" id="GO:0071539">
    <property type="term" value="P:protein localization to centrosome"/>
    <property type="evidence" value="ECO:0000315"/>
    <property type="project" value="UniProtKB"/>
</dbReference>
<dbReference type="CDD" id="cd10142">
    <property type="entry name" value="HD_SAS6_N"/>
    <property type="match status" value="1"/>
</dbReference>
<dbReference type="Gene3D" id="2.170.210.20">
    <property type="entry name" value="Spindle assembly abnormal protein 6, N-terminal domain"/>
    <property type="match status" value="1"/>
</dbReference>
<dbReference type="InterPro" id="IPR053997">
    <property type="entry name" value="SAS-6_C_CC"/>
</dbReference>
<dbReference type="InterPro" id="IPR032396">
    <property type="entry name" value="SAS-6_N"/>
</dbReference>
<dbReference type="InterPro" id="IPR038558">
    <property type="entry name" value="SAS-6_N_sf"/>
</dbReference>
<dbReference type="PANTHER" id="PTHR44281">
    <property type="entry name" value="SPINDLE ASSEMBLY ABNORMAL PROTEIN 6 HOMOLOG"/>
    <property type="match status" value="1"/>
</dbReference>
<dbReference type="PANTHER" id="PTHR44281:SF2">
    <property type="entry name" value="SPINDLE ASSEMBLY ABNORMAL PROTEIN 6 HOMOLOG"/>
    <property type="match status" value="1"/>
</dbReference>
<dbReference type="Pfam" id="PF22216">
    <property type="entry name" value="Sas-6_C_CC"/>
    <property type="match status" value="1"/>
</dbReference>
<dbReference type="Pfam" id="PF16531">
    <property type="entry name" value="SAS-6_N"/>
    <property type="match status" value="1"/>
</dbReference>
<sequence>MWPPGSEDSYSAKMDYGKSVVNILPSVEMLVNFNGEMTRSSKRSCLLYAERVDFKELLQLRLTEKSDQRRMYITTVDSASFQDLKQDQSLNVSFSGFIDNVVRMLKDCQSGKLELHLTTRDQNLSSGREVHDYYLQFVEIRSFKNLVHLSLPCRSAPLNTVLFYINSMLEASHKKQYILEQSMQQMQAEINAQRAHAERLTTENTNIREALAENTRILEEKHAAEVHQYQEKLSKINEQRSNELERNRRAISGFQAQLDKASLEKAELKSAQEQAEKRCQTLSEELSCCKARVCTLKEQNDKLHGDVANIRKHERKLEYKIEDLKQHTVELQEHIQKGNKEKANIAAELEAEKKILHTKRQALEMASEEISKANQIIVKQSQELLNLKKTIAWRTEVALQQEKAVQAKESLLSLRENELREARITIEKLREEIPQQLQSMRNFAQGLEQKYSKQILILKERLAIPTGKENRR</sequence>
<protein>
    <recommendedName>
        <fullName>Spindle assembly abnormal protein 6 homolog</fullName>
    </recommendedName>
</protein>
<evidence type="ECO:0000250" key="1"/>
<evidence type="ECO:0000250" key="2">
    <source>
        <dbReference type="UniProtKB" id="Q7ZVT3"/>
    </source>
</evidence>
<evidence type="ECO:0000255" key="3"/>
<evidence type="ECO:0000269" key="4">
    <source>
    </source>
</evidence>
<evidence type="ECO:0000269" key="5">
    <source>
    </source>
</evidence>
<evidence type="ECO:0000269" key="6">
    <source>
    </source>
</evidence>
<evidence type="ECO:0000269" key="7">
    <source>
    </source>
</evidence>
<evidence type="ECO:0000269" key="8">
    <source>
    </source>
</evidence>
<evidence type="ECO:0000305" key="9"/>
<evidence type="ECO:0007829" key="10">
    <source>
        <dbReference type="PDB" id="5AL7"/>
    </source>
</evidence>
<proteinExistence type="evidence at protein level"/>
<gene>
    <name type="primary">Sas-6</name>
    <name type="synonym">SAS6</name>
    <name type="ORF">CG15524</name>
</gene>
<reference key="1">
    <citation type="journal article" date="2000" name="Science">
        <title>The genome sequence of Drosophila melanogaster.</title>
        <authorList>
            <person name="Adams M.D."/>
            <person name="Celniker S.E."/>
            <person name="Holt R.A."/>
            <person name="Evans C.A."/>
            <person name="Gocayne J.D."/>
            <person name="Amanatides P.G."/>
            <person name="Scherer S.E."/>
            <person name="Li P.W."/>
            <person name="Hoskins R.A."/>
            <person name="Galle R.F."/>
            <person name="George R.A."/>
            <person name="Lewis S.E."/>
            <person name="Richards S."/>
            <person name="Ashburner M."/>
            <person name="Henderson S.N."/>
            <person name="Sutton G.G."/>
            <person name="Wortman J.R."/>
            <person name="Yandell M.D."/>
            <person name="Zhang Q."/>
            <person name="Chen L.X."/>
            <person name="Brandon R.C."/>
            <person name="Rogers Y.-H.C."/>
            <person name="Blazej R.G."/>
            <person name="Champe M."/>
            <person name="Pfeiffer B.D."/>
            <person name="Wan K.H."/>
            <person name="Doyle C."/>
            <person name="Baxter E.G."/>
            <person name="Helt G."/>
            <person name="Nelson C.R."/>
            <person name="Miklos G.L.G."/>
            <person name="Abril J.F."/>
            <person name="Agbayani A."/>
            <person name="An H.-J."/>
            <person name="Andrews-Pfannkoch C."/>
            <person name="Baldwin D."/>
            <person name="Ballew R.M."/>
            <person name="Basu A."/>
            <person name="Baxendale J."/>
            <person name="Bayraktaroglu L."/>
            <person name="Beasley E.M."/>
            <person name="Beeson K.Y."/>
            <person name="Benos P.V."/>
            <person name="Berman B.P."/>
            <person name="Bhandari D."/>
            <person name="Bolshakov S."/>
            <person name="Borkova D."/>
            <person name="Botchan M.R."/>
            <person name="Bouck J."/>
            <person name="Brokstein P."/>
            <person name="Brottier P."/>
            <person name="Burtis K.C."/>
            <person name="Busam D.A."/>
            <person name="Butler H."/>
            <person name="Cadieu E."/>
            <person name="Center A."/>
            <person name="Chandra I."/>
            <person name="Cherry J.M."/>
            <person name="Cawley S."/>
            <person name="Dahlke C."/>
            <person name="Davenport L.B."/>
            <person name="Davies P."/>
            <person name="de Pablos B."/>
            <person name="Delcher A."/>
            <person name="Deng Z."/>
            <person name="Mays A.D."/>
            <person name="Dew I."/>
            <person name="Dietz S.M."/>
            <person name="Dodson K."/>
            <person name="Doup L.E."/>
            <person name="Downes M."/>
            <person name="Dugan-Rocha S."/>
            <person name="Dunkov B.C."/>
            <person name="Dunn P."/>
            <person name="Durbin K.J."/>
            <person name="Evangelista C.C."/>
            <person name="Ferraz C."/>
            <person name="Ferriera S."/>
            <person name="Fleischmann W."/>
            <person name="Fosler C."/>
            <person name="Gabrielian A.E."/>
            <person name="Garg N.S."/>
            <person name="Gelbart W.M."/>
            <person name="Glasser K."/>
            <person name="Glodek A."/>
            <person name="Gong F."/>
            <person name="Gorrell J.H."/>
            <person name="Gu Z."/>
            <person name="Guan P."/>
            <person name="Harris M."/>
            <person name="Harris N.L."/>
            <person name="Harvey D.A."/>
            <person name="Heiman T.J."/>
            <person name="Hernandez J.R."/>
            <person name="Houck J."/>
            <person name="Hostin D."/>
            <person name="Houston K.A."/>
            <person name="Howland T.J."/>
            <person name="Wei M.-H."/>
            <person name="Ibegwam C."/>
            <person name="Jalali M."/>
            <person name="Kalush F."/>
            <person name="Karpen G.H."/>
            <person name="Ke Z."/>
            <person name="Kennison J.A."/>
            <person name="Ketchum K.A."/>
            <person name="Kimmel B.E."/>
            <person name="Kodira C.D."/>
            <person name="Kraft C.L."/>
            <person name="Kravitz S."/>
            <person name="Kulp D."/>
            <person name="Lai Z."/>
            <person name="Lasko P."/>
            <person name="Lei Y."/>
            <person name="Levitsky A.A."/>
            <person name="Li J.H."/>
            <person name="Li Z."/>
            <person name="Liang Y."/>
            <person name="Lin X."/>
            <person name="Liu X."/>
            <person name="Mattei B."/>
            <person name="McIntosh T.C."/>
            <person name="McLeod M.P."/>
            <person name="McPherson D."/>
            <person name="Merkulov G."/>
            <person name="Milshina N.V."/>
            <person name="Mobarry C."/>
            <person name="Morris J."/>
            <person name="Moshrefi A."/>
            <person name="Mount S.M."/>
            <person name="Moy M."/>
            <person name="Murphy B."/>
            <person name="Murphy L."/>
            <person name="Muzny D.M."/>
            <person name="Nelson D.L."/>
            <person name="Nelson D.R."/>
            <person name="Nelson K.A."/>
            <person name="Nixon K."/>
            <person name="Nusskern D.R."/>
            <person name="Pacleb J.M."/>
            <person name="Palazzolo M."/>
            <person name="Pittman G.S."/>
            <person name="Pan S."/>
            <person name="Pollard J."/>
            <person name="Puri V."/>
            <person name="Reese M.G."/>
            <person name="Reinert K."/>
            <person name="Remington K."/>
            <person name="Saunders R.D.C."/>
            <person name="Scheeler F."/>
            <person name="Shen H."/>
            <person name="Shue B.C."/>
            <person name="Siden-Kiamos I."/>
            <person name="Simpson M."/>
            <person name="Skupski M.P."/>
            <person name="Smith T.J."/>
            <person name="Spier E."/>
            <person name="Spradling A.C."/>
            <person name="Stapleton M."/>
            <person name="Strong R."/>
            <person name="Sun E."/>
            <person name="Svirskas R."/>
            <person name="Tector C."/>
            <person name="Turner R."/>
            <person name="Venter E."/>
            <person name="Wang A.H."/>
            <person name="Wang X."/>
            <person name="Wang Z.-Y."/>
            <person name="Wassarman D.A."/>
            <person name="Weinstock G.M."/>
            <person name="Weissenbach J."/>
            <person name="Williams S.M."/>
            <person name="Woodage T."/>
            <person name="Worley K.C."/>
            <person name="Wu D."/>
            <person name="Yang S."/>
            <person name="Yao Q.A."/>
            <person name="Ye J."/>
            <person name="Yeh R.-F."/>
            <person name="Zaveri J.S."/>
            <person name="Zhan M."/>
            <person name="Zhang G."/>
            <person name="Zhao Q."/>
            <person name="Zheng L."/>
            <person name="Zheng X.H."/>
            <person name="Zhong F.N."/>
            <person name="Zhong W."/>
            <person name="Zhou X."/>
            <person name="Zhu S.C."/>
            <person name="Zhu X."/>
            <person name="Smith H.O."/>
            <person name="Gibbs R.A."/>
            <person name="Myers E.W."/>
            <person name="Rubin G.M."/>
            <person name="Venter J.C."/>
        </authorList>
    </citation>
    <scope>NUCLEOTIDE SEQUENCE [LARGE SCALE GENOMIC DNA]</scope>
    <source>
        <strain>Berkeley</strain>
    </source>
</reference>
<reference key="2">
    <citation type="journal article" date="2002" name="Genome Biol.">
        <title>Annotation of the Drosophila melanogaster euchromatic genome: a systematic review.</title>
        <authorList>
            <person name="Misra S."/>
            <person name="Crosby M.A."/>
            <person name="Mungall C.J."/>
            <person name="Matthews B.B."/>
            <person name="Campbell K.S."/>
            <person name="Hradecky P."/>
            <person name="Huang Y."/>
            <person name="Kaminker J.S."/>
            <person name="Millburn G.H."/>
            <person name="Prochnik S.E."/>
            <person name="Smith C.D."/>
            <person name="Tupy J.L."/>
            <person name="Whitfield E.J."/>
            <person name="Bayraktaroglu L."/>
            <person name="Berman B.P."/>
            <person name="Bettencourt B.R."/>
            <person name="Celniker S.E."/>
            <person name="de Grey A.D.N.J."/>
            <person name="Drysdale R.A."/>
            <person name="Harris N.L."/>
            <person name="Richter J."/>
            <person name="Russo S."/>
            <person name="Schroeder A.J."/>
            <person name="Shu S.Q."/>
            <person name="Stapleton M."/>
            <person name="Yamada C."/>
            <person name="Ashburner M."/>
            <person name="Gelbart W.M."/>
            <person name="Rubin G.M."/>
            <person name="Lewis S.E."/>
        </authorList>
    </citation>
    <scope>GENOME REANNOTATION</scope>
    <source>
        <strain>Berkeley</strain>
    </source>
</reference>
<reference key="3">
    <citation type="journal article" date="2002" name="Genome Biol.">
        <title>A Drosophila full-length cDNA resource.</title>
        <authorList>
            <person name="Stapleton M."/>
            <person name="Carlson J.W."/>
            <person name="Brokstein P."/>
            <person name="Yu C."/>
            <person name="Champe M."/>
            <person name="George R.A."/>
            <person name="Guarin H."/>
            <person name="Kronmiller B."/>
            <person name="Pacleb J.M."/>
            <person name="Park S."/>
            <person name="Wan K.H."/>
            <person name="Rubin G.M."/>
            <person name="Celniker S.E."/>
        </authorList>
    </citation>
    <scope>NUCLEOTIDE SEQUENCE [LARGE SCALE MRNA]</scope>
    <source>
        <strain>Berkeley</strain>
        <tissue>Testis</tissue>
    </source>
</reference>
<reference key="4">
    <citation type="submission" date="2013-06" db="EMBL/GenBank/DDBJ databases">
        <authorList>
            <person name="Carlson J."/>
            <person name="Booth B."/>
            <person name="Frise E."/>
            <person name="Park S."/>
            <person name="Wan K."/>
            <person name="Yu C."/>
            <person name="Celniker S."/>
        </authorList>
    </citation>
    <scope>NUCLEOTIDE SEQUENCE [LARGE SCALE MRNA]</scope>
    <source>
        <strain>Berkeley</strain>
    </source>
</reference>
<reference key="5">
    <citation type="journal article" date="2007" name="Science">
        <title>Genes required for mitotic spindle assembly in Drosophila S2 cells.</title>
        <authorList>
            <person name="Goshima G."/>
            <person name="Wollman R."/>
            <person name="Goodwin S.S."/>
            <person name="Zhang N."/>
            <person name="Scholey J.M."/>
            <person name="Vale R.D."/>
            <person name="Stuurman N."/>
        </authorList>
    </citation>
    <scope>FUNCTION</scope>
</reference>
<reference key="6">
    <citation type="journal article" date="2007" name="Science">
        <title>Revisiting the role of the mother centriole in centriole biogenesis.</title>
        <authorList>
            <person name="Rodrigues-Martins A."/>
            <person name="Riparbelli M."/>
            <person name="Callaini G."/>
            <person name="Glover D.M."/>
            <person name="Bettencourt-Dias M."/>
        </authorList>
    </citation>
    <scope>FUNCTION</scope>
    <scope>SUBCELLULAR LOCATION</scope>
</reference>
<reference key="7">
    <citation type="journal article" date="2018" name="Nat. Cell Biol.">
        <title>Differential regulation of transition zone and centriole proteins contributes to ciliary base diversity.</title>
        <authorList>
            <person name="Jana S.C."/>
            <person name="Mendonca S."/>
            <person name="Machado P."/>
            <person name="Werner S."/>
            <person name="Rocha J."/>
            <person name="Pereira A."/>
            <person name="Maiato H."/>
            <person name="Bettencourt-Dias M."/>
        </authorList>
    </citation>
    <scope>FUNCTION</scope>
    <scope>SUBCELLULAR LOCATION</scope>
    <scope>TISSUE SPECIFICITY</scope>
    <scope>DEVELOPMENTAL STAGE</scope>
    <scope>DISRUPTION PHENOTYPE</scope>
</reference>
<reference key="8">
    <citation type="journal article" date="2018" name="Nat. Genet.">
        <title>Gorab is a Golgi protein required for structure and duplication of Drosophila centrioles.</title>
        <authorList>
            <person name="Kovacs L."/>
            <person name="Chao-Chu J."/>
            <person name="Schneider S."/>
            <person name="Gottardo M."/>
            <person name="Tzolovsky G."/>
            <person name="Dzhindzhev N.S."/>
            <person name="Riparbelli M.G."/>
            <person name="Callaini G."/>
            <person name="Glover D.M."/>
        </authorList>
    </citation>
    <scope>INTERACTION WITH GORAB</scope>
    <scope>SUBCELLULAR LOCATION</scope>
    <scope>IDENTIFICATION BY MASS SPECTROMETRY</scope>
</reference>
<reference key="9">
    <citation type="journal article" date="2021" name="Elife">
        <title>The dimeric Golgi protein Gorab binds to Sas6 as a monomer to mediate centriole duplication.</title>
        <authorList>
            <person name="Fatalska A."/>
            <person name="Stepinac E."/>
            <person name="Richter M."/>
            <person name="Kovacs L."/>
            <person name="Pietras Z."/>
            <person name="Puchinger M."/>
            <person name="Dong G."/>
            <person name="Dadlez M."/>
            <person name="Glover D.M."/>
        </authorList>
    </citation>
    <scope>FUNCTION</scope>
    <scope>SUBUNIT</scope>
    <scope>INTERACTION WITH GORAB</scope>
    <scope>DISRUPTION PHENOTYPE</scope>
    <scope>MUTAGENESIS OF PHE-143; MET-440; LEU-447; SER-452 AND LEU-456</scope>
</reference>
<accession>Q9VAC8</accession>
<accession>Q8T8U6</accession>
<accession>S0ASJ5</accession>
<feature type="chain" id="PRO_0000189979" description="Spindle assembly abnormal protein 6 homolog">
    <location>
        <begin position="1"/>
        <end position="472"/>
    </location>
</feature>
<feature type="domain" description="PISA">
    <location>
        <begin position="53"/>
        <end position="105"/>
    </location>
</feature>
<feature type="region of interest" description="Necessary for interaction with Gorab" evidence="6">
    <location>
        <begin position="351"/>
        <end position="462"/>
    </location>
</feature>
<feature type="coiled-coil region" evidence="3">
    <location>
        <begin position="178"/>
        <end position="441"/>
    </location>
</feature>
<feature type="mutagenesis site" description="No effect on binding with Gorab or homodimerization." evidence="8">
    <original>F</original>
    <variation>D</variation>
    <location>
        <position position="143"/>
    </location>
</feature>
<feature type="mutagenesis site" description="No effect on binding with Gorab or homodimerization. Rescues coordination defects and centriole loss in both interphase and mitotic cells of the null mutant." evidence="8">
    <original>M</original>
    <variation>A</variation>
    <location>
        <position position="440"/>
    </location>
</feature>
<feature type="mutagenesis site" description="Loss of binding with Gorab and thus abolishes subcellular localization of Gorab at the centriole. No effect on homodimerization or localization of Gorab to the Golgi. Partially rescues coordination defects and centriole loss in the null mutant." evidence="8">
    <original>L</original>
    <variation>A</variation>
    <location>
        <position position="447"/>
    </location>
</feature>
<feature type="mutagenesis site" description="No effect on binding with Gorab or homodimerization." evidence="8">
    <original>S</original>
    <variation>A</variation>
    <location>
        <position position="452"/>
    </location>
</feature>
<feature type="mutagenesis site" description="No effect on binding with Gorab or homodimerization." evidence="8">
    <original>L</original>
    <variation>A</variation>
    <location>
        <position position="456"/>
    </location>
</feature>
<feature type="sequence conflict" description="In Ref. 3; AAL68137." evidence="9" ref="3">
    <original>E</original>
    <variation>D</variation>
    <location>
        <position position="36"/>
    </location>
</feature>
<feature type="sequence conflict" description="In Ref. 3; AAL68137." evidence="9" ref="3">
    <original>I</original>
    <variation>L</variation>
    <location>
        <position position="207"/>
    </location>
</feature>
<feature type="sequence conflict" description="In Ref. 3; AAL68137." evidence="9" ref="3">
    <original>H</original>
    <variation>Q</variation>
    <location>
        <position position="313"/>
    </location>
</feature>
<feature type="helix" evidence="10">
    <location>
        <begin position="17"/>
        <end position="19"/>
    </location>
</feature>
<feature type="strand" evidence="10">
    <location>
        <begin position="20"/>
        <end position="33"/>
    </location>
</feature>
<feature type="strand" evidence="10">
    <location>
        <begin position="41"/>
        <end position="55"/>
    </location>
</feature>
<feature type="strand" evidence="10">
    <location>
        <begin position="57"/>
        <end position="64"/>
    </location>
</feature>
<feature type="strand" evidence="10">
    <location>
        <begin position="67"/>
        <end position="77"/>
    </location>
</feature>
<feature type="helix" evidence="10">
    <location>
        <begin position="78"/>
        <end position="87"/>
    </location>
</feature>
<feature type="helix" evidence="10">
    <location>
        <begin position="94"/>
        <end position="110"/>
    </location>
</feature>
<feature type="strand" evidence="10">
    <location>
        <begin position="111"/>
        <end position="119"/>
    </location>
</feature>
<feature type="helix" evidence="10">
    <location>
        <begin position="124"/>
        <end position="126"/>
    </location>
</feature>
<feature type="strand" evidence="10">
    <location>
        <begin position="133"/>
        <end position="139"/>
    </location>
</feature>
<feature type="strand" evidence="10">
    <location>
        <begin position="146"/>
        <end position="155"/>
    </location>
</feature>
<feature type="helix" evidence="10">
    <location>
        <begin position="158"/>
        <end position="184"/>
    </location>
</feature>
<feature type="helix" evidence="10">
    <location>
        <begin position="187"/>
        <end position="197"/>
    </location>
</feature>
<feature type="turn" evidence="10">
    <location>
        <begin position="198"/>
        <end position="201"/>
    </location>
</feature>
<feature type="helix" evidence="10">
    <location>
        <begin position="202"/>
        <end position="205"/>
    </location>
</feature>
<feature type="helix" evidence="10">
    <location>
        <begin position="207"/>
        <end position="213"/>
    </location>
</feature>
<name>SAS6_DROME</name>
<organism>
    <name type="scientific">Drosophila melanogaster</name>
    <name type="common">Fruit fly</name>
    <dbReference type="NCBI Taxonomy" id="7227"/>
    <lineage>
        <taxon>Eukaryota</taxon>
        <taxon>Metazoa</taxon>
        <taxon>Ecdysozoa</taxon>
        <taxon>Arthropoda</taxon>
        <taxon>Hexapoda</taxon>
        <taxon>Insecta</taxon>
        <taxon>Pterygota</taxon>
        <taxon>Neoptera</taxon>
        <taxon>Endopterygota</taxon>
        <taxon>Diptera</taxon>
        <taxon>Brachycera</taxon>
        <taxon>Muscomorpha</taxon>
        <taxon>Ephydroidea</taxon>
        <taxon>Drosophilidae</taxon>
        <taxon>Drosophila</taxon>
        <taxon>Sophophora</taxon>
    </lineage>
</organism>
<keyword id="KW-0002">3D-structure</keyword>
<keyword id="KW-0131">Cell cycle</keyword>
<keyword id="KW-0966">Cell projection</keyword>
<keyword id="KW-0175">Coiled coil</keyword>
<keyword id="KW-0963">Cytoplasm</keyword>
<keyword id="KW-0206">Cytoskeleton</keyword>
<keyword id="KW-1185">Reference proteome</keyword>